<organism>
    <name type="scientific">Mus musculus</name>
    <name type="common">Mouse</name>
    <dbReference type="NCBI Taxonomy" id="10090"/>
    <lineage>
        <taxon>Eukaryota</taxon>
        <taxon>Metazoa</taxon>
        <taxon>Chordata</taxon>
        <taxon>Craniata</taxon>
        <taxon>Vertebrata</taxon>
        <taxon>Euteleostomi</taxon>
        <taxon>Mammalia</taxon>
        <taxon>Eutheria</taxon>
        <taxon>Euarchontoglires</taxon>
        <taxon>Glires</taxon>
        <taxon>Rodentia</taxon>
        <taxon>Myomorpha</taxon>
        <taxon>Muroidea</taxon>
        <taxon>Muridae</taxon>
        <taxon>Murinae</taxon>
        <taxon>Mus</taxon>
        <taxon>Mus</taxon>
    </lineage>
</organism>
<feature type="chain" id="PRO_0000123338" description="Small ribosomal subunit protein uS11">
    <location>
        <begin position="1"/>
        <end position="151"/>
    </location>
</feature>
<feature type="region of interest" description="Disordered" evidence="2">
    <location>
        <begin position="131"/>
        <end position="151"/>
    </location>
</feature>
<feature type="compositionally biased region" description="Basic residues" evidence="2">
    <location>
        <begin position="142"/>
        <end position="151"/>
    </location>
</feature>
<feature type="modified residue" description="Phosphoserine" evidence="1">
    <location>
        <position position="16"/>
    </location>
</feature>
<feature type="modified residue" description="Phosphothreonine" evidence="1">
    <location>
        <position position="133"/>
    </location>
</feature>
<feature type="modified residue" description="Phosphoserine" evidence="7">
    <location>
        <position position="139"/>
    </location>
</feature>
<feature type="cross-link" description="Glycyl lysine isopeptide (Lys-Gly) (interchain with G-Cter in SUMO2)" evidence="1">
    <location>
        <position position="61"/>
    </location>
</feature>
<feature type="cross-link" description="Glycyl lysine isopeptide (Lys-Gly) (interchain with G-Cter in SUMO2)" evidence="1">
    <location>
        <position position="63"/>
    </location>
</feature>
<feature type="cross-link" description="Glycyl lysine isopeptide (Lys-Gly) (interchain with G-Cter in SUMO2)" evidence="1">
    <location>
        <position position="106"/>
    </location>
</feature>
<gene>
    <name type="primary">Rps14</name>
</gene>
<accession>P62264</accession>
<accession>P06366</accession>
<accession>Q544W4</accession>
<proteinExistence type="evidence at protein level"/>
<keyword id="KW-0002">3D-structure</keyword>
<keyword id="KW-0963">Cytoplasm</keyword>
<keyword id="KW-1017">Isopeptide bond</keyword>
<keyword id="KW-0539">Nucleus</keyword>
<keyword id="KW-0597">Phosphoprotein</keyword>
<keyword id="KW-1185">Reference proteome</keyword>
<keyword id="KW-0687">Ribonucleoprotein</keyword>
<keyword id="KW-0689">Ribosomal protein</keyword>
<keyword id="KW-0832">Ubl conjugation</keyword>
<protein>
    <recommendedName>
        <fullName evidence="4">Small ribosomal subunit protein uS11</fullName>
    </recommendedName>
    <alternativeName>
        <fullName>40S ribosomal protein S14</fullName>
    </alternativeName>
</protein>
<dbReference type="EMBL" id="AK003148">
    <property type="protein sequence ID" value="BAB22604.1"/>
    <property type="molecule type" value="mRNA"/>
</dbReference>
<dbReference type="EMBL" id="AK011213">
    <property type="protein sequence ID" value="BAB27472.1"/>
    <property type="molecule type" value="mRNA"/>
</dbReference>
<dbReference type="EMBL" id="AK012425">
    <property type="protein sequence ID" value="BAB28230.1"/>
    <property type="molecule type" value="mRNA"/>
</dbReference>
<dbReference type="EMBL" id="AK012584">
    <property type="protein sequence ID" value="BAB28334.1"/>
    <property type="molecule type" value="mRNA"/>
</dbReference>
<dbReference type="EMBL" id="AK019233">
    <property type="protein sequence ID" value="BAB31615.1"/>
    <property type="molecule type" value="mRNA"/>
</dbReference>
<dbReference type="EMBL" id="AK028106">
    <property type="protein sequence ID" value="BAC25751.1"/>
    <property type="molecule type" value="mRNA"/>
</dbReference>
<dbReference type="EMBL" id="AK146976">
    <property type="protein sequence ID" value="BAE27580.1"/>
    <property type="molecule type" value="mRNA"/>
</dbReference>
<dbReference type="EMBL" id="AK168237">
    <property type="protein sequence ID" value="BAE40187.1"/>
    <property type="molecule type" value="mRNA"/>
</dbReference>
<dbReference type="EMBL" id="BC042940">
    <property type="protein sequence ID" value="AAH42940.1"/>
    <property type="molecule type" value="mRNA"/>
</dbReference>
<dbReference type="EMBL" id="BC081449">
    <property type="protein sequence ID" value="AAH81449.1"/>
    <property type="molecule type" value="mRNA"/>
</dbReference>
<dbReference type="EMBL" id="BC062874">
    <property type="protein sequence ID" value="AAH62874.1"/>
    <property type="molecule type" value="mRNA"/>
</dbReference>
<dbReference type="CCDS" id="CCDS29274.1"/>
<dbReference type="RefSeq" id="NP_065625.2">
    <property type="nucleotide sequence ID" value="NM_020600.4"/>
</dbReference>
<dbReference type="PDB" id="7CPU">
    <property type="method" value="EM"/>
    <property type="resolution" value="2.82 A"/>
    <property type="chains" value="SO=1-151"/>
</dbReference>
<dbReference type="PDB" id="7CPV">
    <property type="method" value="EM"/>
    <property type="resolution" value="3.03 A"/>
    <property type="chains" value="SO=1-151"/>
</dbReference>
<dbReference type="PDB" id="7LS1">
    <property type="method" value="EM"/>
    <property type="resolution" value="3.30 A"/>
    <property type="chains" value="O3=1-151"/>
</dbReference>
<dbReference type="PDB" id="7LS2">
    <property type="method" value="EM"/>
    <property type="resolution" value="3.10 A"/>
    <property type="chains" value="O3=1-151"/>
</dbReference>
<dbReference type="PDBsum" id="7CPU"/>
<dbReference type="PDBsum" id="7CPV"/>
<dbReference type="PDBsum" id="7LS1"/>
<dbReference type="PDBsum" id="7LS2"/>
<dbReference type="EMDB" id="EMD-23500"/>
<dbReference type="EMDB" id="EMD-23501"/>
<dbReference type="EMDB" id="EMD-30432"/>
<dbReference type="EMDB" id="EMD-30433"/>
<dbReference type="SMR" id="P62264"/>
<dbReference type="BioGRID" id="203002">
    <property type="interactions" value="126"/>
</dbReference>
<dbReference type="ComplexPortal" id="CPX-5261">
    <property type="entry name" value="40S cytosolic small ribosomal subunit"/>
</dbReference>
<dbReference type="FunCoup" id="P62264">
    <property type="interactions" value="1811"/>
</dbReference>
<dbReference type="IntAct" id="P62264">
    <property type="interactions" value="5"/>
</dbReference>
<dbReference type="MINT" id="P62264"/>
<dbReference type="STRING" id="10090.ENSMUSP00000157948"/>
<dbReference type="GlyGen" id="P62264">
    <property type="glycosylation" value="2 sites, 1 N-linked glycan (1 site), 1 O-linked glycan (1 site)"/>
</dbReference>
<dbReference type="iPTMnet" id="P62264"/>
<dbReference type="PhosphoSitePlus" id="P62264"/>
<dbReference type="SwissPalm" id="P62264"/>
<dbReference type="jPOST" id="P62264"/>
<dbReference type="PaxDb" id="10090-ENSMUSP00000025511"/>
<dbReference type="ProteomicsDB" id="260845"/>
<dbReference type="Pumba" id="P62264"/>
<dbReference type="TopDownProteomics" id="P62264"/>
<dbReference type="Antibodypedia" id="1243">
    <property type="antibodies" value="270 antibodies from 30 providers"/>
</dbReference>
<dbReference type="DNASU" id="20044"/>
<dbReference type="Ensembl" id="ENSMUST00000025511.11">
    <property type="protein sequence ID" value="ENSMUSP00000025511.4"/>
    <property type="gene ID" value="ENSMUSG00000024608.12"/>
</dbReference>
<dbReference type="Ensembl" id="ENSMUST00000118551.8">
    <property type="protein sequence ID" value="ENSMUSP00000113081.2"/>
    <property type="gene ID" value="ENSMUSG00000024608.12"/>
</dbReference>
<dbReference type="Ensembl" id="ENSMUST00000122279.2">
    <property type="protein sequence ID" value="ENSMUSP00000113504.2"/>
    <property type="gene ID" value="ENSMUSG00000024608.12"/>
</dbReference>
<dbReference type="Ensembl" id="ENSMUST00000235603.2">
    <property type="protein sequence ID" value="ENSMUSP00000157948.2"/>
    <property type="gene ID" value="ENSMUSG00000024608.12"/>
</dbReference>
<dbReference type="Ensembl" id="ENSMUST00000235966.2">
    <property type="protein sequence ID" value="ENSMUSP00000158138.2"/>
    <property type="gene ID" value="ENSMUSG00000024608.12"/>
</dbReference>
<dbReference type="GeneID" id="20044"/>
<dbReference type="KEGG" id="mmu:20044"/>
<dbReference type="UCSC" id="uc008fay.2">
    <property type="organism name" value="mouse"/>
</dbReference>
<dbReference type="AGR" id="MGI:98107"/>
<dbReference type="CTD" id="6208"/>
<dbReference type="MGI" id="MGI:98107">
    <property type="gene designation" value="Rps14"/>
</dbReference>
<dbReference type="VEuPathDB" id="HostDB:ENSMUSG00000024608"/>
<dbReference type="eggNOG" id="KOG0407">
    <property type="taxonomic scope" value="Eukaryota"/>
</dbReference>
<dbReference type="GeneTree" id="ENSGT00390000000703"/>
<dbReference type="HOGENOM" id="CLU_072439_6_0_1"/>
<dbReference type="InParanoid" id="P62264"/>
<dbReference type="OMA" id="KWGVAHI"/>
<dbReference type="OrthoDB" id="1677536at2759"/>
<dbReference type="PhylomeDB" id="P62264"/>
<dbReference type="TreeFam" id="TF300125"/>
<dbReference type="Reactome" id="R-MMU-156827">
    <property type="pathway name" value="L13a-mediated translational silencing of Ceruloplasmin expression"/>
</dbReference>
<dbReference type="Reactome" id="R-MMU-1799339">
    <property type="pathway name" value="SRP-dependent cotranslational protein targeting to membrane"/>
</dbReference>
<dbReference type="Reactome" id="R-MMU-6791226">
    <property type="pathway name" value="Major pathway of rRNA processing in the nucleolus and cytosol"/>
</dbReference>
<dbReference type="Reactome" id="R-MMU-72649">
    <property type="pathway name" value="Translation initiation complex formation"/>
</dbReference>
<dbReference type="Reactome" id="R-MMU-72689">
    <property type="pathway name" value="Formation of a pool of free 40S subunits"/>
</dbReference>
<dbReference type="Reactome" id="R-MMU-72695">
    <property type="pathway name" value="Formation of the ternary complex, and subsequently, the 43S complex"/>
</dbReference>
<dbReference type="Reactome" id="R-MMU-72702">
    <property type="pathway name" value="Ribosomal scanning and start codon recognition"/>
</dbReference>
<dbReference type="Reactome" id="R-MMU-72706">
    <property type="pathway name" value="GTP hydrolysis and joining of the 60S ribosomal subunit"/>
</dbReference>
<dbReference type="Reactome" id="R-MMU-975956">
    <property type="pathway name" value="Nonsense Mediated Decay (NMD) independent of the Exon Junction Complex (EJC)"/>
</dbReference>
<dbReference type="Reactome" id="R-MMU-975957">
    <property type="pathway name" value="Nonsense Mediated Decay (NMD) enhanced by the Exon Junction Complex (EJC)"/>
</dbReference>
<dbReference type="BioGRID-ORCS" id="20044">
    <property type="hits" value="25 hits in 71 CRISPR screens"/>
</dbReference>
<dbReference type="CD-CODE" id="5E82D60E">
    <property type="entry name" value="Nucleolus"/>
</dbReference>
<dbReference type="CD-CODE" id="CE726F99">
    <property type="entry name" value="Postsynaptic density"/>
</dbReference>
<dbReference type="CD-CODE" id="DE1E139C">
    <property type="entry name" value="Chromatoid body"/>
</dbReference>
<dbReference type="ChiTaRS" id="Rps14">
    <property type="organism name" value="mouse"/>
</dbReference>
<dbReference type="PRO" id="PR:P62264"/>
<dbReference type="Proteomes" id="UP000000589">
    <property type="component" value="Chromosome 18"/>
</dbReference>
<dbReference type="RNAct" id="P62264">
    <property type="molecule type" value="protein"/>
</dbReference>
<dbReference type="Bgee" id="ENSMUSG00000024608">
    <property type="expression patterns" value="Expressed in medial ganglionic eminence and 251 other cell types or tissues"/>
</dbReference>
<dbReference type="ExpressionAtlas" id="P62264">
    <property type="expression patterns" value="baseline and differential"/>
</dbReference>
<dbReference type="GO" id="GO:0005737">
    <property type="term" value="C:cytoplasm"/>
    <property type="evidence" value="ECO:0000303"/>
    <property type="project" value="ComplexPortal"/>
</dbReference>
<dbReference type="GO" id="GO:0005829">
    <property type="term" value="C:cytosol"/>
    <property type="evidence" value="ECO:0000304"/>
    <property type="project" value="Reactome"/>
</dbReference>
<dbReference type="GO" id="GO:0022627">
    <property type="term" value="C:cytosolic small ribosomal subunit"/>
    <property type="evidence" value="ECO:0000314"/>
    <property type="project" value="UniProtKB"/>
</dbReference>
<dbReference type="GO" id="GO:0005739">
    <property type="term" value="C:mitochondrion"/>
    <property type="evidence" value="ECO:0007005"/>
    <property type="project" value="MGI"/>
</dbReference>
<dbReference type="GO" id="GO:0005730">
    <property type="term" value="C:nucleolus"/>
    <property type="evidence" value="ECO:0007669"/>
    <property type="project" value="UniProtKB-SubCell"/>
</dbReference>
<dbReference type="GO" id="GO:0098794">
    <property type="term" value="C:postsynapse"/>
    <property type="evidence" value="ECO:0000303"/>
    <property type="project" value="SynGO"/>
</dbReference>
<dbReference type="GO" id="GO:0014069">
    <property type="term" value="C:postsynaptic density"/>
    <property type="evidence" value="ECO:0007669"/>
    <property type="project" value="Ensembl"/>
</dbReference>
<dbReference type="GO" id="GO:0098793">
    <property type="term" value="C:presynapse"/>
    <property type="evidence" value="ECO:0000303"/>
    <property type="project" value="SynGO"/>
</dbReference>
<dbReference type="GO" id="GO:0005840">
    <property type="term" value="C:ribosome"/>
    <property type="evidence" value="ECO:0000303"/>
    <property type="project" value="SynGO"/>
</dbReference>
<dbReference type="GO" id="GO:0032040">
    <property type="term" value="C:small-subunit processome"/>
    <property type="evidence" value="ECO:0000250"/>
    <property type="project" value="UniProtKB"/>
</dbReference>
<dbReference type="GO" id="GO:0045202">
    <property type="term" value="C:synapse"/>
    <property type="evidence" value="ECO:0000314"/>
    <property type="project" value="SynGO"/>
</dbReference>
<dbReference type="GO" id="GO:0048027">
    <property type="term" value="F:mRNA 5'-UTR binding"/>
    <property type="evidence" value="ECO:0007669"/>
    <property type="project" value="Ensembl"/>
</dbReference>
<dbReference type="GO" id="GO:0003723">
    <property type="term" value="F:RNA binding"/>
    <property type="evidence" value="ECO:0000250"/>
    <property type="project" value="UniProtKB"/>
</dbReference>
<dbReference type="GO" id="GO:0003735">
    <property type="term" value="F:structural constituent of ribosome"/>
    <property type="evidence" value="ECO:0000314"/>
    <property type="project" value="UniProtKB"/>
</dbReference>
<dbReference type="GO" id="GO:0045182">
    <property type="term" value="F:translation regulator activity"/>
    <property type="evidence" value="ECO:0007669"/>
    <property type="project" value="Ensembl"/>
</dbReference>
<dbReference type="GO" id="GO:0002181">
    <property type="term" value="P:cytoplasmic translation"/>
    <property type="evidence" value="ECO:0000303"/>
    <property type="project" value="ComplexPortal"/>
</dbReference>
<dbReference type="GO" id="GO:0030218">
    <property type="term" value="P:erythrocyte differentiation"/>
    <property type="evidence" value="ECO:0007669"/>
    <property type="project" value="Ensembl"/>
</dbReference>
<dbReference type="GO" id="GO:0030490">
    <property type="term" value="P:maturation of SSU-rRNA"/>
    <property type="evidence" value="ECO:0000250"/>
    <property type="project" value="UniProtKB"/>
</dbReference>
<dbReference type="GO" id="GO:0000122">
    <property type="term" value="P:negative regulation of transcription by RNA polymerase II"/>
    <property type="evidence" value="ECO:0007669"/>
    <property type="project" value="Ensembl"/>
</dbReference>
<dbReference type="GO" id="GO:0000028">
    <property type="term" value="P:ribosomal small subunit assembly"/>
    <property type="evidence" value="ECO:0000250"/>
    <property type="project" value="UniProtKB"/>
</dbReference>
<dbReference type="GO" id="GO:0042274">
    <property type="term" value="P:ribosomal small subunit biogenesis"/>
    <property type="evidence" value="ECO:0000250"/>
    <property type="project" value="UniProtKB"/>
</dbReference>
<dbReference type="GO" id="GO:0140242">
    <property type="term" value="P:translation at postsynapse"/>
    <property type="evidence" value="ECO:0000303"/>
    <property type="project" value="SynGO"/>
</dbReference>
<dbReference type="GO" id="GO:0140236">
    <property type="term" value="P:translation at presynapse"/>
    <property type="evidence" value="ECO:0000303"/>
    <property type="project" value="SynGO"/>
</dbReference>
<dbReference type="FunFam" id="3.30.420.80:FF:000018">
    <property type="entry name" value="40S ribosomal protein S14"/>
    <property type="match status" value="1"/>
</dbReference>
<dbReference type="Gene3D" id="3.30.420.80">
    <property type="entry name" value="Ribosomal protein S11"/>
    <property type="match status" value="1"/>
</dbReference>
<dbReference type="HAMAP" id="MF_01310">
    <property type="entry name" value="Ribosomal_uS11"/>
    <property type="match status" value="1"/>
</dbReference>
<dbReference type="InterPro" id="IPR001971">
    <property type="entry name" value="Ribosomal_uS11"/>
</dbReference>
<dbReference type="InterPro" id="IPR018102">
    <property type="entry name" value="Ribosomal_uS11_CS"/>
</dbReference>
<dbReference type="InterPro" id="IPR036967">
    <property type="entry name" value="Ribosomal_uS11_sf"/>
</dbReference>
<dbReference type="NCBIfam" id="NF007176">
    <property type="entry name" value="PRK09607.1"/>
    <property type="match status" value="1"/>
</dbReference>
<dbReference type="PANTHER" id="PTHR11759">
    <property type="entry name" value="40S RIBOSOMAL PROTEIN S14/30S RIBOSOMAL PROTEIN S11"/>
    <property type="match status" value="1"/>
</dbReference>
<dbReference type="Pfam" id="PF00411">
    <property type="entry name" value="Ribosomal_S11"/>
    <property type="match status" value="1"/>
</dbReference>
<dbReference type="PIRSF" id="PIRSF002131">
    <property type="entry name" value="Ribosomal_S11"/>
    <property type="match status" value="1"/>
</dbReference>
<dbReference type="SUPFAM" id="SSF53137">
    <property type="entry name" value="Translational machinery components"/>
    <property type="match status" value="1"/>
</dbReference>
<dbReference type="PROSITE" id="PS00054">
    <property type="entry name" value="RIBOSOMAL_S11"/>
    <property type="match status" value="1"/>
</dbReference>
<reference key="1">
    <citation type="journal article" date="2005" name="Science">
        <title>The transcriptional landscape of the mammalian genome.</title>
        <authorList>
            <person name="Carninci P."/>
            <person name="Kasukawa T."/>
            <person name="Katayama S."/>
            <person name="Gough J."/>
            <person name="Frith M.C."/>
            <person name="Maeda N."/>
            <person name="Oyama R."/>
            <person name="Ravasi T."/>
            <person name="Lenhard B."/>
            <person name="Wells C."/>
            <person name="Kodzius R."/>
            <person name="Shimokawa K."/>
            <person name="Bajic V.B."/>
            <person name="Brenner S.E."/>
            <person name="Batalov S."/>
            <person name="Forrest A.R."/>
            <person name="Zavolan M."/>
            <person name="Davis M.J."/>
            <person name="Wilming L.G."/>
            <person name="Aidinis V."/>
            <person name="Allen J.E."/>
            <person name="Ambesi-Impiombato A."/>
            <person name="Apweiler R."/>
            <person name="Aturaliya R.N."/>
            <person name="Bailey T.L."/>
            <person name="Bansal M."/>
            <person name="Baxter L."/>
            <person name="Beisel K.W."/>
            <person name="Bersano T."/>
            <person name="Bono H."/>
            <person name="Chalk A.M."/>
            <person name="Chiu K.P."/>
            <person name="Choudhary V."/>
            <person name="Christoffels A."/>
            <person name="Clutterbuck D.R."/>
            <person name="Crowe M.L."/>
            <person name="Dalla E."/>
            <person name="Dalrymple B.P."/>
            <person name="de Bono B."/>
            <person name="Della Gatta G."/>
            <person name="di Bernardo D."/>
            <person name="Down T."/>
            <person name="Engstrom P."/>
            <person name="Fagiolini M."/>
            <person name="Faulkner G."/>
            <person name="Fletcher C.F."/>
            <person name="Fukushima T."/>
            <person name="Furuno M."/>
            <person name="Futaki S."/>
            <person name="Gariboldi M."/>
            <person name="Georgii-Hemming P."/>
            <person name="Gingeras T.R."/>
            <person name="Gojobori T."/>
            <person name="Green R.E."/>
            <person name="Gustincich S."/>
            <person name="Harbers M."/>
            <person name="Hayashi Y."/>
            <person name="Hensch T.K."/>
            <person name="Hirokawa N."/>
            <person name="Hill D."/>
            <person name="Huminiecki L."/>
            <person name="Iacono M."/>
            <person name="Ikeo K."/>
            <person name="Iwama A."/>
            <person name="Ishikawa T."/>
            <person name="Jakt M."/>
            <person name="Kanapin A."/>
            <person name="Katoh M."/>
            <person name="Kawasawa Y."/>
            <person name="Kelso J."/>
            <person name="Kitamura H."/>
            <person name="Kitano H."/>
            <person name="Kollias G."/>
            <person name="Krishnan S.P."/>
            <person name="Kruger A."/>
            <person name="Kummerfeld S.K."/>
            <person name="Kurochkin I.V."/>
            <person name="Lareau L.F."/>
            <person name="Lazarevic D."/>
            <person name="Lipovich L."/>
            <person name="Liu J."/>
            <person name="Liuni S."/>
            <person name="McWilliam S."/>
            <person name="Madan Babu M."/>
            <person name="Madera M."/>
            <person name="Marchionni L."/>
            <person name="Matsuda H."/>
            <person name="Matsuzawa S."/>
            <person name="Miki H."/>
            <person name="Mignone F."/>
            <person name="Miyake S."/>
            <person name="Morris K."/>
            <person name="Mottagui-Tabar S."/>
            <person name="Mulder N."/>
            <person name="Nakano N."/>
            <person name="Nakauchi H."/>
            <person name="Ng P."/>
            <person name="Nilsson R."/>
            <person name="Nishiguchi S."/>
            <person name="Nishikawa S."/>
            <person name="Nori F."/>
            <person name="Ohara O."/>
            <person name="Okazaki Y."/>
            <person name="Orlando V."/>
            <person name="Pang K.C."/>
            <person name="Pavan W.J."/>
            <person name="Pavesi G."/>
            <person name="Pesole G."/>
            <person name="Petrovsky N."/>
            <person name="Piazza S."/>
            <person name="Reed J."/>
            <person name="Reid J.F."/>
            <person name="Ring B.Z."/>
            <person name="Ringwald M."/>
            <person name="Rost B."/>
            <person name="Ruan Y."/>
            <person name="Salzberg S.L."/>
            <person name="Sandelin A."/>
            <person name="Schneider C."/>
            <person name="Schoenbach C."/>
            <person name="Sekiguchi K."/>
            <person name="Semple C.A."/>
            <person name="Seno S."/>
            <person name="Sessa L."/>
            <person name="Sheng Y."/>
            <person name="Shibata Y."/>
            <person name="Shimada H."/>
            <person name="Shimada K."/>
            <person name="Silva D."/>
            <person name="Sinclair B."/>
            <person name="Sperling S."/>
            <person name="Stupka E."/>
            <person name="Sugiura K."/>
            <person name="Sultana R."/>
            <person name="Takenaka Y."/>
            <person name="Taki K."/>
            <person name="Tammoja K."/>
            <person name="Tan S.L."/>
            <person name="Tang S."/>
            <person name="Taylor M.S."/>
            <person name="Tegner J."/>
            <person name="Teichmann S.A."/>
            <person name="Ueda H.R."/>
            <person name="van Nimwegen E."/>
            <person name="Verardo R."/>
            <person name="Wei C.L."/>
            <person name="Yagi K."/>
            <person name="Yamanishi H."/>
            <person name="Zabarovsky E."/>
            <person name="Zhu S."/>
            <person name="Zimmer A."/>
            <person name="Hide W."/>
            <person name="Bult C."/>
            <person name="Grimmond S.M."/>
            <person name="Teasdale R.D."/>
            <person name="Liu E.T."/>
            <person name="Brusic V."/>
            <person name="Quackenbush J."/>
            <person name="Wahlestedt C."/>
            <person name="Mattick J.S."/>
            <person name="Hume D.A."/>
            <person name="Kai C."/>
            <person name="Sasaki D."/>
            <person name="Tomaru Y."/>
            <person name="Fukuda S."/>
            <person name="Kanamori-Katayama M."/>
            <person name="Suzuki M."/>
            <person name="Aoki J."/>
            <person name="Arakawa T."/>
            <person name="Iida J."/>
            <person name="Imamura K."/>
            <person name="Itoh M."/>
            <person name="Kato T."/>
            <person name="Kawaji H."/>
            <person name="Kawagashira N."/>
            <person name="Kawashima T."/>
            <person name="Kojima M."/>
            <person name="Kondo S."/>
            <person name="Konno H."/>
            <person name="Nakano K."/>
            <person name="Ninomiya N."/>
            <person name="Nishio T."/>
            <person name="Okada M."/>
            <person name="Plessy C."/>
            <person name="Shibata K."/>
            <person name="Shiraki T."/>
            <person name="Suzuki S."/>
            <person name="Tagami M."/>
            <person name="Waki K."/>
            <person name="Watahiki A."/>
            <person name="Okamura-Oho Y."/>
            <person name="Suzuki H."/>
            <person name="Kawai J."/>
            <person name="Hayashizaki Y."/>
        </authorList>
    </citation>
    <scope>NUCLEOTIDE SEQUENCE [LARGE SCALE MRNA]</scope>
    <source>
        <strain>C57BL/6J</strain>
        <strain>DBA/2J</strain>
        <tissue>Kidney</tissue>
        <tissue>Pancreas</tissue>
    </source>
</reference>
<reference key="2">
    <citation type="journal article" date="2004" name="Genome Res.">
        <title>The status, quality, and expansion of the NIH full-length cDNA project: the Mammalian Gene Collection (MGC).</title>
        <authorList>
            <consortium name="The MGC Project Team"/>
        </authorList>
    </citation>
    <scope>NUCLEOTIDE SEQUENCE [LARGE SCALE MRNA]</scope>
    <source>
        <strain>C57BL/6J</strain>
        <strain>FVB/N-3</strain>
        <tissue>Brain</tissue>
        <tissue>Mammary gland</tissue>
    </source>
</reference>
<reference key="3">
    <citation type="journal article" date="2010" name="Cell">
        <title>A tissue-specific atlas of mouse protein phosphorylation and expression.</title>
        <authorList>
            <person name="Huttlin E.L."/>
            <person name="Jedrychowski M.P."/>
            <person name="Elias J.E."/>
            <person name="Goswami T."/>
            <person name="Rad R."/>
            <person name="Beausoleil S.A."/>
            <person name="Villen J."/>
            <person name="Haas W."/>
            <person name="Sowa M.E."/>
            <person name="Gygi S.P."/>
        </authorList>
    </citation>
    <scope>PHOSPHORYLATION [LARGE SCALE ANALYSIS] AT SER-139</scope>
    <scope>IDENTIFICATION BY MASS SPECTROMETRY [LARGE SCALE ANALYSIS]</scope>
    <source>
        <tissue>Brain</tissue>
        <tissue>Brown adipose tissue</tissue>
        <tissue>Heart</tissue>
        <tissue>Kidney</tissue>
        <tissue>Liver</tissue>
        <tissue>Lung</tissue>
        <tissue>Pancreas</tissue>
        <tissue>Spleen</tissue>
        <tissue>Testis</tissue>
    </source>
</reference>
<reference evidence="5 6" key="4">
    <citation type="journal article" date="2022" name="Nature">
        <title>A male germ-cell-specific ribosome controls male fertility.</title>
        <authorList>
            <person name="Li H."/>
            <person name="Huo Y."/>
            <person name="He X."/>
            <person name="Yao L."/>
            <person name="Zhang H."/>
            <person name="Cui Y."/>
            <person name="Xiao H."/>
            <person name="Xie W."/>
            <person name="Zhang D."/>
            <person name="Wang Y."/>
            <person name="Zhang S."/>
            <person name="Tu H."/>
            <person name="Cheng Y."/>
            <person name="Guo Y."/>
            <person name="Cao X."/>
            <person name="Zhu Y."/>
            <person name="Jiang T."/>
            <person name="Guo X."/>
            <person name="Qin Y."/>
            <person name="Sha J."/>
        </authorList>
    </citation>
    <scope>STRUCTURE BY ELECTRON MICROSCOPY (3.03 ANGSTROMS) OF RIBOSOME</scope>
    <scope>FUNCTION</scope>
    <scope>SUBUNIT</scope>
    <scope>SUBCELLULAR LOCATION</scope>
</reference>
<name>RS14_MOUSE</name>
<sequence length="151" mass="16273">MAPRKGKEKKEEQVISLGPQVAEGENVFGVCHIFASFNDTFVHVTDLSGKETICRVTGGMKVKADRDESSPYAAMLAAQDVAQRCKELGITALHIKLRATGGNRTKTPGPGAQSALRALARSGMKIGRIEDVTPIPSDSTRRKGGRRGRRL</sequence>
<comment type="function">
    <text evidence="1 3">Component of the small ribosomal subunit (PubMed:36517592). The ribosome is a large ribonucleoprotein complex responsible for the synthesis of proteins in the cell (PubMed:36517592). Part of the small subunit (SSU) processome, first precursor of the small eukaryotic ribosomal subunit. During the assembly of the SSU processome in the nucleolus, many ribosome biogenesis factors, an RNA chaperone and ribosomal proteins associate with the nascent pre-rRNA and work in concert to generate RNA folding, modifications, rearrangements and cleavage as well as targeted degradation of pre-ribosomal RNA by the RNA exosome (By similarity).</text>
</comment>
<comment type="subunit">
    <text evidence="1 3">Component of the small ribosomal subunit (PubMed:36517592). Part of the small subunit (SSU) processome, composed of more than 70 proteins and the RNA chaperone small nucleolar RNA (snoRNA) U3 (By similarity).</text>
</comment>
<comment type="subcellular location">
    <subcellularLocation>
        <location evidence="3">Cytoplasm</location>
    </subcellularLocation>
    <subcellularLocation>
        <location evidence="1">Nucleus</location>
        <location evidence="1">Nucleolus</location>
    </subcellularLocation>
</comment>
<comment type="similarity">
    <text evidence="4">Belongs to the universal ribosomal protein uS11 family.</text>
</comment>
<evidence type="ECO:0000250" key="1">
    <source>
        <dbReference type="UniProtKB" id="P62263"/>
    </source>
</evidence>
<evidence type="ECO:0000256" key="2">
    <source>
        <dbReference type="SAM" id="MobiDB-lite"/>
    </source>
</evidence>
<evidence type="ECO:0000269" key="3">
    <source>
    </source>
</evidence>
<evidence type="ECO:0000305" key="4"/>
<evidence type="ECO:0007744" key="5">
    <source>
        <dbReference type="PDB" id="7CPU"/>
    </source>
</evidence>
<evidence type="ECO:0007744" key="6">
    <source>
        <dbReference type="PDB" id="7CPV"/>
    </source>
</evidence>
<evidence type="ECO:0007744" key="7">
    <source>
    </source>
</evidence>